<sequence length="99" mass="10685">MSSTSAASAAGQGALPAYDTPLGITNPPIDELLERTSSKYALVIYSAKRARQINDYYNQLGDGILEYVGPLVEPGLQEKPLSIALREIHADLLEHTEGE</sequence>
<name>RPOZ_RHOE4</name>
<dbReference type="EC" id="2.7.7.6" evidence="1"/>
<dbReference type="EMBL" id="AP008957">
    <property type="protein sequence ID" value="BAH33717.1"/>
    <property type="molecule type" value="Genomic_DNA"/>
</dbReference>
<dbReference type="RefSeq" id="WP_003944996.1">
    <property type="nucleotide sequence ID" value="NC_012490.1"/>
</dbReference>
<dbReference type="SMR" id="C0ZZD2"/>
<dbReference type="GeneID" id="93804123"/>
<dbReference type="KEGG" id="rer:RER_30090"/>
<dbReference type="eggNOG" id="COG1758">
    <property type="taxonomic scope" value="Bacteria"/>
</dbReference>
<dbReference type="HOGENOM" id="CLU_125406_1_1_11"/>
<dbReference type="Proteomes" id="UP000002204">
    <property type="component" value="Chromosome"/>
</dbReference>
<dbReference type="GO" id="GO:0000428">
    <property type="term" value="C:DNA-directed RNA polymerase complex"/>
    <property type="evidence" value="ECO:0007669"/>
    <property type="project" value="UniProtKB-KW"/>
</dbReference>
<dbReference type="GO" id="GO:0003677">
    <property type="term" value="F:DNA binding"/>
    <property type="evidence" value="ECO:0007669"/>
    <property type="project" value="UniProtKB-UniRule"/>
</dbReference>
<dbReference type="GO" id="GO:0003899">
    <property type="term" value="F:DNA-directed RNA polymerase activity"/>
    <property type="evidence" value="ECO:0007669"/>
    <property type="project" value="UniProtKB-UniRule"/>
</dbReference>
<dbReference type="GO" id="GO:0006351">
    <property type="term" value="P:DNA-templated transcription"/>
    <property type="evidence" value="ECO:0007669"/>
    <property type="project" value="UniProtKB-UniRule"/>
</dbReference>
<dbReference type="FunFam" id="3.90.940.10:FF:000002">
    <property type="entry name" value="DNA-directed RNA polymerase subunit omega"/>
    <property type="match status" value="1"/>
</dbReference>
<dbReference type="Gene3D" id="3.90.940.10">
    <property type="match status" value="1"/>
</dbReference>
<dbReference type="HAMAP" id="MF_00366">
    <property type="entry name" value="RNApol_bact_RpoZ"/>
    <property type="match status" value="1"/>
</dbReference>
<dbReference type="InterPro" id="IPR003716">
    <property type="entry name" value="DNA-dir_RNA_pol_omega"/>
</dbReference>
<dbReference type="InterPro" id="IPR006110">
    <property type="entry name" value="Pol_omega/Rpo6/RPB6"/>
</dbReference>
<dbReference type="InterPro" id="IPR036161">
    <property type="entry name" value="RPB6/omega-like_sf"/>
</dbReference>
<dbReference type="NCBIfam" id="TIGR00690">
    <property type="entry name" value="rpoZ"/>
    <property type="match status" value="1"/>
</dbReference>
<dbReference type="PANTHER" id="PTHR34476">
    <property type="entry name" value="DNA-DIRECTED RNA POLYMERASE SUBUNIT OMEGA"/>
    <property type="match status" value="1"/>
</dbReference>
<dbReference type="PANTHER" id="PTHR34476:SF1">
    <property type="entry name" value="DNA-DIRECTED RNA POLYMERASE SUBUNIT OMEGA"/>
    <property type="match status" value="1"/>
</dbReference>
<dbReference type="Pfam" id="PF01192">
    <property type="entry name" value="RNA_pol_Rpb6"/>
    <property type="match status" value="1"/>
</dbReference>
<dbReference type="SMART" id="SM01409">
    <property type="entry name" value="RNA_pol_Rpb6"/>
    <property type="match status" value="1"/>
</dbReference>
<dbReference type="SUPFAM" id="SSF63562">
    <property type="entry name" value="RPB6/omega subunit-like"/>
    <property type="match status" value="1"/>
</dbReference>
<keyword id="KW-0240">DNA-directed RNA polymerase</keyword>
<keyword id="KW-0548">Nucleotidyltransferase</keyword>
<keyword id="KW-0804">Transcription</keyword>
<keyword id="KW-0808">Transferase</keyword>
<proteinExistence type="inferred from homology"/>
<accession>C0ZZD2</accession>
<feature type="chain" id="PRO_1000205527" description="DNA-directed RNA polymerase subunit omega">
    <location>
        <begin position="1"/>
        <end position="99"/>
    </location>
</feature>
<feature type="region of interest" description="Disordered" evidence="2">
    <location>
        <begin position="1"/>
        <end position="20"/>
    </location>
</feature>
<feature type="compositionally biased region" description="Low complexity" evidence="2">
    <location>
        <begin position="1"/>
        <end position="10"/>
    </location>
</feature>
<comment type="function">
    <text evidence="1">Promotes RNA polymerase assembly. Latches the N- and C-terminal regions of the beta' subunit thereby facilitating its interaction with the beta and alpha subunits.</text>
</comment>
<comment type="catalytic activity">
    <reaction evidence="1">
        <text>RNA(n) + a ribonucleoside 5'-triphosphate = RNA(n+1) + diphosphate</text>
        <dbReference type="Rhea" id="RHEA:21248"/>
        <dbReference type="Rhea" id="RHEA-COMP:14527"/>
        <dbReference type="Rhea" id="RHEA-COMP:17342"/>
        <dbReference type="ChEBI" id="CHEBI:33019"/>
        <dbReference type="ChEBI" id="CHEBI:61557"/>
        <dbReference type="ChEBI" id="CHEBI:140395"/>
        <dbReference type="EC" id="2.7.7.6"/>
    </reaction>
</comment>
<comment type="subunit">
    <text evidence="1">The RNAP catalytic core consists of 2 alpha, 1 beta, 1 beta' and 1 omega subunit. When a sigma factor is associated with the core the holoenzyme is formed, which can initiate transcription.</text>
</comment>
<comment type="similarity">
    <text evidence="1">Belongs to the RNA polymerase subunit omega family.</text>
</comment>
<protein>
    <recommendedName>
        <fullName evidence="1">DNA-directed RNA polymerase subunit omega</fullName>
        <shortName evidence="1">RNAP omega subunit</shortName>
        <ecNumber evidence="1">2.7.7.6</ecNumber>
    </recommendedName>
    <alternativeName>
        <fullName evidence="1">RNA polymerase omega subunit</fullName>
    </alternativeName>
    <alternativeName>
        <fullName evidence="1">Transcriptase subunit omega</fullName>
    </alternativeName>
</protein>
<gene>
    <name evidence="1" type="primary">rpoZ</name>
    <name type="ordered locus">RER_30090</name>
</gene>
<evidence type="ECO:0000255" key="1">
    <source>
        <dbReference type="HAMAP-Rule" id="MF_00366"/>
    </source>
</evidence>
<evidence type="ECO:0000256" key="2">
    <source>
        <dbReference type="SAM" id="MobiDB-lite"/>
    </source>
</evidence>
<organism>
    <name type="scientific">Rhodococcus erythropolis (strain PR4 / NBRC 100887)</name>
    <dbReference type="NCBI Taxonomy" id="234621"/>
    <lineage>
        <taxon>Bacteria</taxon>
        <taxon>Bacillati</taxon>
        <taxon>Actinomycetota</taxon>
        <taxon>Actinomycetes</taxon>
        <taxon>Mycobacteriales</taxon>
        <taxon>Nocardiaceae</taxon>
        <taxon>Rhodococcus</taxon>
        <taxon>Rhodococcus erythropolis group</taxon>
    </lineage>
</organism>
<reference key="1">
    <citation type="submission" date="2005-03" db="EMBL/GenBank/DDBJ databases">
        <title>Comparison of the complete genome sequences of Rhodococcus erythropolis PR4 and Rhodococcus opacus B4.</title>
        <authorList>
            <person name="Takarada H."/>
            <person name="Sekine M."/>
            <person name="Hosoyama A."/>
            <person name="Yamada R."/>
            <person name="Fujisawa T."/>
            <person name="Omata S."/>
            <person name="Shimizu A."/>
            <person name="Tsukatani N."/>
            <person name="Tanikawa S."/>
            <person name="Fujita N."/>
            <person name="Harayama S."/>
        </authorList>
    </citation>
    <scope>NUCLEOTIDE SEQUENCE [LARGE SCALE GENOMIC DNA]</scope>
    <source>
        <strain>PR4 / NBRC 100887</strain>
    </source>
</reference>